<comment type="function">
    <text evidence="2">Component of the cytochrome c oxidase, the last enzyme in the mitochondrial electron transport chain which drives oxidative phosphorylation. The respiratory chain contains 3 multisubunit complexes succinate dehydrogenase (complex II, CII), ubiquinol-cytochrome c oxidoreductase (cytochrome b-c1 complex, complex III, CIII) and cytochrome c oxidase (complex IV, CIV), that cooperate to transfer electrons derived from NADH and succinate to molecular oxygen, creating an electrochemical gradient over the inner membrane that drives transmembrane transport and the ATP synthase. Cytochrome c oxidase is the component of the respiratory chain that catalyzes the reduction of oxygen to water. Electrons originating from reduced cytochrome c in the intermembrane space (IMS) are transferred via the dinuclear copper A center (CU(A)) of subunit 2 and heme A of subunit 1 to the active site in subunit 1, a binuclear center (BNC) formed by heme A3 and copper B (CU(B)). The BNC reduces molecular oxygen to 2 water molecules using 4 electrons from cytochrome c in the IMS and 4 protons from the mitochondrial matrix.</text>
</comment>
<comment type="pathway">
    <text evidence="2">Energy metabolism; oxidative phosphorylation.</text>
</comment>
<comment type="subunit">
    <text evidence="3">Component of the cytochrome c oxidase (complex IV, CIV), a multisubunit enzyme composed of 14 subunits. The complex is composed of a catalytic core of 3 subunits MT-CO1, MT-CO2 and MT-CO3, encoded in the mitochondrial DNA, and 11 supernumerary subunits COX4I1 (or COX4I2), COX5A, COX5B, COX6A2 (or COX6A1), COX6B1 (or COX6B2), COX6C, COX7A1 (or COX7A2), COX7B, COX7C, COX8B and NDUFA4, which are encoded in the nuclear genome (By similarity). The complex exists as a monomer or a dimer and forms supercomplexes (SCs) in the inner mitochondrial membrane with NADH-ubiquinone oxidoreductase (complex I, CI) and ubiquinol-cytochrome c oxidoreductase (cytochrome b-c1 complex, complex III, CIII), resulting in different assemblies (supercomplex SCI(1)III(2)IV(1) and megacomplex MCI(2)III(2)IV(2)) (By similarity). Interacts with PET100 (By similarity).</text>
</comment>
<comment type="subcellular location">
    <subcellularLocation>
        <location evidence="2">Mitochondrion inner membrane</location>
        <topology evidence="2">Single-pass membrane protein</topology>
    </subcellularLocation>
</comment>
<comment type="similarity">
    <text evidence="6">Belongs to the cytochrome c oxidase VIIa family.</text>
</comment>
<sequence length="83" mass="9305">MLRNLLALRQIAKRTISTSSRRQFENKVPEKQKLFQEDNGIPVHLKGGIADALLYRATLILTVGGTAYAMYELAVASFPKKQD</sequence>
<reference key="1">
    <citation type="journal article" date="1989" name="Nucleic Acids Res.">
        <title>Nucleotide sequence of a cDNA for bovine cytochrome c oxidase subunit VIIa.</title>
        <authorList>
            <person name="Seelan R.S."/>
            <person name="Scheuner D."/>
            <person name="Lomax M.I."/>
            <person name="Grossman L.I."/>
        </authorList>
    </citation>
    <scope>NUCLEOTIDE SEQUENCE [MRNA]</scope>
</reference>
<reference key="2">
    <citation type="journal article" date="1991" name="J. Biol. Chem.">
        <title>Cytochrome c oxidase subunit VIIa isoforms. Characterization and expression of bovine cDNAs.</title>
        <authorList>
            <person name="Seelan R.S."/>
            <person name="Grossman L.I."/>
        </authorList>
    </citation>
    <scope>NUCLEOTIDE SEQUENCE [MRNA]</scope>
    <scope>SEQUENCE REVISION</scope>
</reference>
<reference key="3">
    <citation type="journal article" date="1993" name="Genomics">
        <title>Structural organization and evolution of the liver isoform gene for bovine cytochrome c oxidase subunit VIIa.</title>
        <authorList>
            <person name="Seelan R.S."/>
            <person name="Grossman L.I."/>
        </authorList>
    </citation>
    <scope>NUCLEOTIDE SEQUENCE [GENOMIC DNA]</scope>
</reference>
<reference key="4">
    <citation type="submission" date="2005-08" db="EMBL/GenBank/DDBJ databases">
        <authorList>
            <consortium name="NIH - Mammalian Gene Collection (MGC) project"/>
        </authorList>
    </citation>
    <scope>NUCLEOTIDE SEQUENCE [LARGE SCALE MRNA]</scope>
    <source>
        <strain>Crossbred X Angus</strain>
        <tissue>Liver</tissue>
    </source>
</reference>
<reference key="5">
    <citation type="journal article" date="1988" name="Biochemistry">
        <title>Tissue-specific differences between heart and liver cytochrome c oxidase.</title>
        <authorList>
            <person name="Yanamura W."/>
            <person name="Zhang Y.-Z."/>
            <person name="Takamiya S."/>
            <person name="Capaldi R.A."/>
        </authorList>
    </citation>
    <scope>PROTEIN SEQUENCE OF 24-60</scope>
    <source>
        <tissue>Liver</tissue>
    </source>
</reference>
<evidence type="ECO:0000250" key="1">
    <source>
        <dbReference type="UniProtKB" id="P07470"/>
    </source>
</evidence>
<evidence type="ECO:0000250" key="2">
    <source>
        <dbReference type="UniProtKB" id="P10174"/>
    </source>
</evidence>
<evidence type="ECO:0000250" key="3">
    <source>
        <dbReference type="UniProtKB" id="P14406"/>
    </source>
</evidence>
<evidence type="ECO:0000250" key="4">
    <source>
        <dbReference type="UniProtKB" id="P48771"/>
    </source>
</evidence>
<evidence type="ECO:0000269" key="5">
    <source>
    </source>
</evidence>
<evidence type="ECO:0000305" key="6"/>
<organism>
    <name type="scientific">Bos taurus</name>
    <name type="common">Bovine</name>
    <dbReference type="NCBI Taxonomy" id="9913"/>
    <lineage>
        <taxon>Eukaryota</taxon>
        <taxon>Metazoa</taxon>
        <taxon>Chordata</taxon>
        <taxon>Craniata</taxon>
        <taxon>Vertebrata</taxon>
        <taxon>Euteleostomi</taxon>
        <taxon>Mammalia</taxon>
        <taxon>Eutheria</taxon>
        <taxon>Laurasiatheria</taxon>
        <taxon>Artiodactyla</taxon>
        <taxon>Ruminantia</taxon>
        <taxon>Pecora</taxon>
        <taxon>Bovidae</taxon>
        <taxon>Bovinae</taxon>
        <taxon>Bos</taxon>
    </lineage>
</organism>
<proteinExistence type="evidence at protein level"/>
<accession>P13184</accession>
<accession>Q3SZX6</accession>
<feature type="transit peptide" description="Mitochondrion" evidence="5">
    <location>
        <begin position="1"/>
        <end position="23"/>
    </location>
</feature>
<feature type="chain" id="PRO_0000006144" description="Cytochrome c oxidase subunit 7A2, mitochondrial">
    <location>
        <begin position="24"/>
        <end position="83"/>
    </location>
</feature>
<feature type="topological domain" description="Mitochondrial matrix" evidence="3">
    <location>
        <begin position="24"/>
        <end position="48"/>
    </location>
</feature>
<feature type="transmembrane region" description="Helical" evidence="1">
    <location>
        <begin position="49"/>
        <end position="77"/>
    </location>
</feature>
<feature type="topological domain" description="Mitochondrial intermembrane" evidence="3">
    <location>
        <begin position="78"/>
        <end position="83"/>
    </location>
</feature>
<feature type="modified residue" description="N6-acetyllysine" evidence="4">
    <location>
        <position position="33"/>
    </location>
</feature>
<feature type="sequence conflict" description="In Ref. 5; AA sequence." evidence="6" ref="5">
    <original>AL</original>
    <variation>NI</variation>
    <location>
        <begin position="52"/>
        <end position="53"/>
    </location>
</feature>
<feature type="sequence conflict" description="In Ref. 1; CAA33313." evidence="6" ref="1">
    <original>L</original>
    <variation>R</variation>
    <location>
        <position position="53"/>
    </location>
</feature>
<feature type="sequence conflict" description="In Ref. 5; AA sequence." evidence="6" ref="5">
    <original>A</original>
    <variation>V</variation>
    <location>
        <position position="57"/>
    </location>
</feature>
<feature type="sequence conflict" description="In Ref. 4; AAI02665 and 5; AA sequence." evidence="6" ref="4 5">
    <original>L</original>
    <variation>M</variation>
    <location>
        <position position="59"/>
    </location>
</feature>
<name>CX7A2_BOVIN</name>
<gene>
    <name type="primary">COX7A2</name>
    <name type="synonym">COX7AL</name>
</gene>
<dbReference type="EMBL" id="X15235">
    <property type="protein sequence ID" value="CAA33313.1"/>
    <property type="molecule type" value="mRNA"/>
</dbReference>
<dbReference type="EMBL" id="L09603">
    <property type="protein sequence ID" value="AAA18218.1"/>
    <property type="molecule type" value="Genomic_DNA"/>
</dbReference>
<dbReference type="EMBL" id="BC102664">
    <property type="protein sequence ID" value="AAI02665.1"/>
    <property type="molecule type" value="mRNA"/>
</dbReference>
<dbReference type="PIR" id="A49355">
    <property type="entry name" value="A49355"/>
</dbReference>
<dbReference type="RefSeq" id="NP_787001.1">
    <property type="nucleotide sequence ID" value="NM_175807.1"/>
</dbReference>
<dbReference type="SMR" id="P13184"/>
<dbReference type="CORUM" id="P13184"/>
<dbReference type="FunCoup" id="P13184">
    <property type="interactions" value="531"/>
</dbReference>
<dbReference type="STRING" id="9913.ENSBTAP00000006715"/>
<dbReference type="GlyGen" id="P13184">
    <property type="glycosylation" value="1 site, 1 O-linked glycan (1 site)"/>
</dbReference>
<dbReference type="PaxDb" id="9913-ENSBTAP00000006715"/>
<dbReference type="PeptideAtlas" id="P13184"/>
<dbReference type="GeneID" id="327688"/>
<dbReference type="KEGG" id="bta:327688"/>
<dbReference type="CTD" id="1347"/>
<dbReference type="eggNOG" id="ENOG502S4DT">
    <property type="taxonomic scope" value="Eukaryota"/>
</dbReference>
<dbReference type="HOGENOM" id="CLU_173437_0_0_1"/>
<dbReference type="InParanoid" id="P13184"/>
<dbReference type="OrthoDB" id="5966508at2759"/>
<dbReference type="TreeFam" id="TF105067"/>
<dbReference type="BRENDA" id="7.1.1.9">
    <property type="organism ID" value="908"/>
</dbReference>
<dbReference type="UniPathway" id="UPA00705"/>
<dbReference type="Proteomes" id="UP000009136">
    <property type="component" value="Unplaced"/>
</dbReference>
<dbReference type="GO" id="GO:0005743">
    <property type="term" value="C:mitochondrial inner membrane"/>
    <property type="evidence" value="ECO:0007669"/>
    <property type="project" value="UniProtKB-SubCell"/>
</dbReference>
<dbReference type="GO" id="GO:0098803">
    <property type="term" value="C:respiratory chain complex"/>
    <property type="evidence" value="ECO:0000318"/>
    <property type="project" value="GO_Central"/>
</dbReference>
<dbReference type="GO" id="GO:0045277">
    <property type="term" value="C:respiratory chain complex IV"/>
    <property type="evidence" value="ECO:0007669"/>
    <property type="project" value="InterPro"/>
</dbReference>
<dbReference type="GO" id="GO:0016491">
    <property type="term" value="F:oxidoreductase activity"/>
    <property type="evidence" value="ECO:0007669"/>
    <property type="project" value="UniProtKB-KW"/>
</dbReference>
<dbReference type="GO" id="GO:0006123">
    <property type="term" value="P:mitochondrial electron transport, cytochrome c to oxygen"/>
    <property type="evidence" value="ECO:0007669"/>
    <property type="project" value="InterPro"/>
</dbReference>
<dbReference type="GO" id="GO:0097250">
    <property type="term" value="P:mitochondrial respirasome assembly"/>
    <property type="evidence" value="ECO:0000318"/>
    <property type="project" value="GO_Central"/>
</dbReference>
<dbReference type="CDD" id="cd00928">
    <property type="entry name" value="Cyt_c_Oxidase_VIIa"/>
    <property type="match status" value="1"/>
</dbReference>
<dbReference type="FunFam" id="4.10.91.10:FF:000001">
    <property type="entry name" value="Cytochrome c oxidase subunit 7A1, mitochondrial"/>
    <property type="match status" value="1"/>
</dbReference>
<dbReference type="Gene3D" id="4.10.91.10">
    <property type="entry name" value="Cytochrome c oxidase, subunit VIIa"/>
    <property type="match status" value="1"/>
</dbReference>
<dbReference type="InterPro" id="IPR039297">
    <property type="entry name" value="COX7a"/>
</dbReference>
<dbReference type="InterPro" id="IPR036539">
    <property type="entry name" value="Cyt_c_oxidase_su7a_sf"/>
</dbReference>
<dbReference type="InterPro" id="IPR003177">
    <property type="entry name" value="Cytc_oxidase_su7a_met"/>
</dbReference>
<dbReference type="PANTHER" id="PTHR10510">
    <property type="entry name" value="CYTOCHROME C OXIDASE POLYPEPTIDE 7A"/>
    <property type="match status" value="1"/>
</dbReference>
<dbReference type="PANTHER" id="PTHR10510:SF15">
    <property type="entry name" value="CYTOCHROME C OXIDASE SUBUNIT 7A2, MITOCHONDRIAL"/>
    <property type="match status" value="1"/>
</dbReference>
<dbReference type="Pfam" id="PF02238">
    <property type="entry name" value="COX7a"/>
    <property type="match status" value="1"/>
</dbReference>
<dbReference type="SUPFAM" id="SSF81419">
    <property type="entry name" value="Mitochondrial cytochrome c oxidase subunit VIIa"/>
    <property type="match status" value="1"/>
</dbReference>
<keyword id="KW-0007">Acetylation</keyword>
<keyword id="KW-0903">Direct protein sequencing</keyword>
<keyword id="KW-0472">Membrane</keyword>
<keyword id="KW-0496">Mitochondrion</keyword>
<keyword id="KW-0999">Mitochondrion inner membrane</keyword>
<keyword id="KW-0560">Oxidoreductase</keyword>
<keyword id="KW-1185">Reference proteome</keyword>
<keyword id="KW-0809">Transit peptide</keyword>
<keyword id="KW-0812">Transmembrane</keyword>
<keyword id="KW-1133">Transmembrane helix</keyword>
<protein>
    <recommendedName>
        <fullName>Cytochrome c oxidase subunit 7A2, mitochondrial</fullName>
    </recommendedName>
    <alternativeName>
        <fullName>Cytochrome c oxidase subunit VIIa-liver/heart</fullName>
        <shortName>Cytochrome c oxidase subunit VIIa-L</shortName>
    </alternativeName>
</protein>